<comment type="function">
    <text evidence="1">Part of the binding-protein-dependent transport system for phosphate; probably responsible for the translocation of the substrate across the membrane.</text>
</comment>
<comment type="subcellular location">
    <subcellularLocation>
        <location evidence="1">Cell membrane</location>
        <topology evidence="2">Multi-pass membrane protein</topology>
    </subcellularLocation>
</comment>
<comment type="similarity">
    <text evidence="3">Belongs to the binding-protein-dependent transport system permease family. CysTW subfamily.</text>
</comment>
<evidence type="ECO:0000250" key="1"/>
<evidence type="ECO:0000255" key="2">
    <source>
        <dbReference type="PROSITE-ProRule" id="PRU00441"/>
    </source>
</evidence>
<evidence type="ECO:0000305" key="3"/>
<name>PSTA1_MYCTO</name>
<keyword id="KW-1003">Cell membrane</keyword>
<keyword id="KW-0472">Membrane</keyword>
<keyword id="KW-0592">Phosphate transport</keyword>
<keyword id="KW-1185">Reference proteome</keyword>
<keyword id="KW-0812">Transmembrane</keyword>
<keyword id="KW-1133">Transmembrane helix</keyword>
<keyword id="KW-0813">Transport</keyword>
<accession>P9WG10</accession>
<accession>L0T7X9</accession>
<accession>O86345</accession>
<accession>Q50795</accession>
<organism>
    <name type="scientific">Mycobacterium tuberculosis (strain CDC 1551 / Oshkosh)</name>
    <dbReference type="NCBI Taxonomy" id="83331"/>
    <lineage>
        <taxon>Bacteria</taxon>
        <taxon>Bacillati</taxon>
        <taxon>Actinomycetota</taxon>
        <taxon>Actinomycetes</taxon>
        <taxon>Mycobacteriales</taxon>
        <taxon>Mycobacteriaceae</taxon>
        <taxon>Mycobacterium</taxon>
        <taxon>Mycobacterium tuberculosis complex</taxon>
    </lineage>
</organism>
<proteinExistence type="inferred from homology"/>
<sequence>MSPSTSIEALDQPVKPVVFRPLTLRRRIKNSVATTFFFTSFVVALIPLVWLLWVVIARGWFAVTRSGWWTHSLRGVLPEQFAGGVYHALYGTLVQAGVAAVLAVPLGLMTAVYLVEYGTGRMSRVTTFTVDVLAGVPSIVAALFVFSLWIATLGFQQSAFAVALALVLLMLPVVVRAGEEMLRLVPDELREASYALGVPKWKTIVRIVAPIAMPGIVSGILLSIARVVGETAPVLVLVGYSHSINLDVFHGNMASLPLLIYTELTNPEHAGFLRVWGAALTLIIVVATINLAAAMIRFVATRRR</sequence>
<feature type="chain" id="PRO_0000428443" description="Phosphate transport system permease protein PstA 1">
    <location>
        <begin position="1"/>
        <end position="304"/>
    </location>
</feature>
<feature type="transmembrane region" description="Helical" evidence="2">
    <location>
        <begin position="36"/>
        <end position="56"/>
    </location>
</feature>
<feature type="transmembrane region" description="Helical" evidence="2">
    <location>
        <begin position="96"/>
        <end position="116"/>
    </location>
</feature>
<feature type="transmembrane region" description="Helical" evidence="2">
    <location>
        <begin position="132"/>
        <end position="152"/>
    </location>
</feature>
<feature type="transmembrane region" description="Helical" evidence="2">
    <location>
        <begin position="155"/>
        <end position="175"/>
    </location>
</feature>
<feature type="transmembrane region" description="Helical" evidence="2">
    <location>
        <begin position="204"/>
        <end position="224"/>
    </location>
</feature>
<feature type="transmembrane region" description="Helical" evidence="2">
    <location>
        <begin position="276"/>
        <end position="296"/>
    </location>
</feature>
<feature type="domain" description="ABC transmembrane type-1" evidence="2">
    <location>
        <begin position="89"/>
        <end position="297"/>
    </location>
</feature>
<reference key="1">
    <citation type="journal article" date="2002" name="J. Bacteriol.">
        <title>Whole-genome comparison of Mycobacterium tuberculosis clinical and laboratory strains.</title>
        <authorList>
            <person name="Fleischmann R.D."/>
            <person name="Alland D."/>
            <person name="Eisen J.A."/>
            <person name="Carpenter L."/>
            <person name="White O."/>
            <person name="Peterson J.D."/>
            <person name="DeBoy R.T."/>
            <person name="Dodson R.J."/>
            <person name="Gwinn M.L."/>
            <person name="Haft D.H."/>
            <person name="Hickey E.K."/>
            <person name="Kolonay J.F."/>
            <person name="Nelson W.C."/>
            <person name="Umayam L.A."/>
            <person name="Ermolaeva M.D."/>
            <person name="Salzberg S.L."/>
            <person name="Delcher A."/>
            <person name="Utterback T.R."/>
            <person name="Weidman J.F."/>
            <person name="Khouri H.M."/>
            <person name="Gill J."/>
            <person name="Mikula A."/>
            <person name="Bishai W."/>
            <person name="Jacobs W.R. Jr."/>
            <person name="Venter J.C."/>
            <person name="Fraser C.M."/>
        </authorList>
    </citation>
    <scope>NUCLEOTIDE SEQUENCE [LARGE SCALE GENOMIC DNA]</scope>
    <source>
        <strain>CDC 1551 / Oshkosh</strain>
    </source>
</reference>
<protein>
    <recommendedName>
        <fullName>Phosphate transport system permease protein PstA 1</fullName>
    </recommendedName>
</protein>
<dbReference type="EMBL" id="AE000516">
    <property type="protein sequence ID" value="AAK45204.1"/>
    <property type="molecule type" value="Genomic_DNA"/>
</dbReference>
<dbReference type="PIR" id="B70584">
    <property type="entry name" value="B70584"/>
</dbReference>
<dbReference type="SMR" id="P9WG10"/>
<dbReference type="KEGG" id="mtc:MT0957"/>
<dbReference type="PATRIC" id="fig|83331.31.peg.1027"/>
<dbReference type="HOGENOM" id="CLU_033621_2_0_11"/>
<dbReference type="Proteomes" id="UP000001020">
    <property type="component" value="Chromosome"/>
</dbReference>
<dbReference type="GO" id="GO:0005886">
    <property type="term" value="C:plasma membrane"/>
    <property type="evidence" value="ECO:0007669"/>
    <property type="project" value="UniProtKB-SubCell"/>
</dbReference>
<dbReference type="GO" id="GO:0005315">
    <property type="term" value="F:phosphate transmembrane transporter activity"/>
    <property type="evidence" value="ECO:0007669"/>
    <property type="project" value="InterPro"/>
</dbReference>
<dbReference type="GO" id="GO:0035435">
    <property type="term" value="P:phosphate ion transmembrane transport"/>
    <property type="evidence" value="ECO:0007669"/>
    <property type="project" value="InterPro"/>
</dbReference>
<dbReference type="CDD" id="cd06261">
    <property type="entry name" value="TM_PBP2"/>
    <property type="match status" value="1"/>
</dbReference>
<dbReference type="Gene3D" id="1.10.3720.10">
    <property type="entry name" value="MetI-like"/>
    <property type="match status" value="1"/>
</dbReference>
<dbReference type="InterPro" id="IPR000515">
    <property type="entry name" value="MetI-like"/>
</dbReference>
<dbReference type="InterPro" id="IPR035906">
    <property type="entry name" value="MetI-like_sf"/>
</dbReference>
<dbReference type="InterPro" id="IPR005672">
    <property type="entry name" value="Phosphate_PstA"/>
</dbReference>
<dbReference type="InterPro" id="IPR051408">
    <property type="entry name" value="Phosphate_transprt_permease"/>
</dbReference>
<dbReference type="NCBIfam" id="TIGR00974">
    <property type="entry name" value="3a0107s02c"/>
    <property type="match status" value="1"/>
</dbReference>
<dbReference type="PANTHER" id="PTHR42922">
    <property type="entry name" value="PHOSPHATE TRANSPORT SYSTEM PERMEASE PROTEIN PSTA"/>
    <property type="match status" value="1"/>
</dbReference>
<dbReference type="PANTHER" id="PTHR42922:SF1">
    <property type="entry name" value="PHOSPHATE TRANSPORT SYSTEM PERMEASE PROTEIN PSTA"/>
    <property type="match status" value="1"/>
</dbReference>
<dbReference type="Pfam" id="PF00528">
    <property type="entry name" value="BPD_transp_1"/>
    <property type="match status" value="1"/>
</dbReference>
<dbReference type="SUPFAM" id="SSF161098">
    <property type="entry name" value="MetI-like"/>
    <property type="match status" value="1"/>
</dbReference>
<dbReference type="PROSITE" id="PS50928">
    <property type="entry name" value="ABC_TM1"/>
    <property type="match status" value="1"/>
</dbReference>
<gene>
    <name type="primary">pstA1</name>
    <name type="ordered locus">MT0957</name>
</gene>